<evidence type="ECO:0000250" key="1"/>
<evidence type="ECO:0000255" key="2">
    <source>
        <dbReference type="PROSITE-ProRule" id="PRU00448"/>
    </source>
</evidence>
<evidence type="ECO:0000305" key="3"/>
<sequence length="101" mass="11302">MNIPLGEKVMLDIVAMFRQYSGDDGRMDMPGLVNLMKENFPNFLSGCEKSDMDYLSNALEKKDDNKDKKVNYSEFLSLLGDITIDHHKIMHGVAPCSGGSQ</sequence>
<proteinExistence type="evidence at protein level"/>
<accession>Q5SY68</accession>
<name>S1A7B_HUMAN</name>
<dbReference type="EMBL" id="AL591704">
    <property type="status" value="NOT_ANNOTATED_CDS"/>
    <property type="molecule type" value="Genomic_DNA"/>
</dbReference>
<dbReference type="EMBL" id="BR000043">
    <property type="protein sequence ID" value="FAA00016.1"/>
    <property type="molecule type" value="Genomic_DNA"/>
</dbReference>
<dbReference type="SMR" id="Q5SY68"/>
<dbReference type="FunCoup" id="Q5SY68">
    <property type="interactions" value="2"/>
</dbReference>
<dbReference type="IntAct" id="Q5SY68">
    <property type="interactions" value="9"/>
</dbReference>
<dbReference type="STRING" id="9606.ENSP00000357714"/>
<dbReference type="BioMuta" id="S100A7L2"/>
<dbReference type="DMDM" id="74744045"/>
<dbReference type="jPOST" id="Q5SY68"/>
<dbReference type="MassIVE" id="Q5SY68"/>
<dbReference type="PaxDb" id="9606-ENSP00000357714"/>
<dbReference type="PeptideAtlas" id="Q5SY68"/>
<dbReference type="ProteomicsDB" id="64016"/>
<dbReference type="Antibodypedia" id="56993">
    <property type="antibodies" value="35 antibodies from 13 providers"/>
</dbReference>
<dbReference type="UCSC" id="uc010pdx.3">
    <property type="organism name" value="human"/>
</dbReference>
<dbReference type="AGR" id="HGNC:21655"/>
<dbReference type="GeneCards" id="S100A7L2"/>
<dbReference type="HGNC" id="HGNC:21655">
    <property type="gene designation" value="S100A7L2"/>
</dbReference>
<dbReference type="neXtProt" id="NX_Q5SY68"/>
<dbReference type="VEuPathDB" id="HostDB:ENSG00000197364"/>
<dbReference type="eggNOG" id="ENOG502SZJ5">
    <property type="taxonomic scope" value="Eukaryota"/>
</dbReference>
<dbReference type="HOGENOM" id="CLU_138624_5_0_1"/>
<dbReference type="InParanoid" id="Q5SY68"/>
<dbReference type="OMA" id="NLMRENF"/>
<dbReference type="OrthoDB" id="9450914at2759"/>
<dbReference type="PAN-GO" id="Q5SY68">
    <property type="GO annotations" value="3 GO annotations based on evolutionary models"/>
</dbReference>
<dbReference type="PhylomeDB" id="Q5SY68"/>
<dbReference type="PathwayCommons" id="Q5SY68"/>
<dbReference type="SignaLink" id="Q5SY68"/>
<dbReference type="ChiTaRS" id="S100A7L2">
    <property type="organism name" value="human"/>
</dbReference>
<dbReference type="Pharos" id="Q5SY68">
    <property type="development level" value="Tdark"/>
</dbReference>
<dbReference type="PRO" id="PR:Q5SY68"/>
<dbReference type="Proteomes" id="UP000005640">
    <property type="component" value="Chromosome 1"/>
</dbReference>
<dbReference type="RNAct" id="Q5SY68">
    <property type="molecule type" value="protein"/>
</dbReference>
<dbReference type="Bgee" id="ENSG00000197364">
    <property type="expression patterns" value="Expressed in cell and 14 other cell types or tissues"/>
</dbReference>
<dbReference type="GO" id="GO:0005737">
    <property type="term" value="C:cytoplasm"/>
    <property type="evidence" value="ECO:0000318"/>
    <property type="project" value="GO_Central"/>
</dbReference>
<dbReference type="GO" id="GO:0005615">
    <property type="term" value="C:extracellular space"/>
    <property type="evidence" value="ECO:0000314"/>
    <property type="project" value="UniProtKB"/>
</dbReference>
<dbReference type="GO" id="GO:0005509">
    <property type="term" value="F:calcium ion binding"/>
    <property type="evidence" value="ECO:0000318"/>
    <property type="project" value="GO_Central"/>
</dbReference>
<dbReference type="GO" id="GO:0048306">
    <property type="term" value="F:calcium-dependent protein binding"/>
    <property type="evidence" value="ECO:0000318"/>
    <property type="project" value="GO_Central"/>
</dbReference>
<dbReference type="GO" id="GO:0043542">
    <property type="term" value="P:endothelial cell migration"/>
    <property type="evidence" value="ECO:0000318"/>
    <property type="project" value="GO_Central"/>
</dbReference>
<dbReference type="FunFam" id="1.10.238.10:FF:000296">
    <property type="entry name" value="Protein S100"/>
    <property type="match status" value="1"/>
</dbReference>
<dbReference type="Gene3D" id="1.10.238.10">
    <property type="entry name" value="EF-hand"/>
    <property type="match status" value="1"/>
</dbReference>
<dbReference type="InterPro" id="IPR011992">
    <property type="entry name" value="EF-hand-dom_pair"/>
</dbReference>
<dbReference type="InterPro" id="IPR018247">
    <property type="entry name" value="EF_Hand_1_Ca_BS"/>
</dbReference>
<dbReference type="InterPro" id="IPR002048">
    <property type="entry name" value="EF_hand_dom"/>
</dbReference>
<dbReference type="PANTHER" id="PTHR11639:SF67">
    <property type="entry name" value="PROTEIN S100-A7-LIKE 2"/>
    <property type="match status" value="1"/>
</dbReference>
<dbReference type="PANTHER" id="PTHR11639">
    <property type="entry name" value="S100 CALCIUM-BINDING PROTEIN"/>
    <property type="match status" value="1"/>
</dbReference>
<dbReference type="SUPFAM" id="SSF47473">
    <property type="entry name" value="EF-hand"/>
    <property type="match status" value="1"/>
</dbReference>
<dbReference type="PROSITE" id="PS00018">
    <property type="entry name" value="EF_HAND_1"/>
    <property type="match status" value="1"/>
</dbReference>
<dbReference type="PROSITE" id="PS50222">
    <property type="entry name" value="EF_HAND_2"/>
    <property type="match status" value="1"/>
</dbReference>
<gene>
    <name type="primary">S100A7L2</name>
    <name type="synonym">S100A7B</name>
</gene>
<feature type="chain" id="PRO_0000270831" description="Protein S100-A7-like 2">
    <location>
        <begin position="1"/>
        <end position="101"/>
    </location>
</feature>
<feature type="domain" description="EF-hand 1" evidence="3">
    <location>
        <begin position="13"/>
        <end position="48"/>
    </location>
</feature>
<feature type="domain" description="EF-hand 2" evidence="2">
    <location>
        <begin position="50"/>
        <end position="85"/>
    </location>
</feature>
<feature type="binding site" evidence="2">
    <location>
        <position position="63"/>
    </location>
    <ligand>
        <name>Ca(2+)</name>
        <dbReference type="ChEBI" id="CHEBI:29108"/>
        <note>high affinity</note>
    </ligand>
</feature>
<feature type="binding site" evidence="2">
    <location>
        <position position="65"/>
    </location>
    <ligand>
        <name>Ca(2+)</name>
        <dbReference type="ChEBI" id="CHEBI:29108"/>
        <note>high affinity</note>
    </ligand>
</feature>
<feature type="binding site" evidence="2">
    <location>
        <position position="67"/>
    </location>
    <ligand>
        <name>Ca(2+)</name>
        <dbReference type="ChEBI" id="CHEBI:29108"/>
        <note>high affinity</note>
    </ligand>
</feature>
<feature type="binding site" evidence="2">
    <location>
        <position position="69"/>
    </location>
    <ligand>
        <name>Ca(2+)</name>
        <dbReference type="ChEBI" id="CHEBI:29108"/>
        <note>high affinity</note>
    </ligand>
</feature>
<feature type="binding site" evidence="2">
    <location>
        <position position="74"/>
    </location>
    <ligand>
        <name>Ca(2+)</name>
        <dbReference type="ChEBI" id="CHEBI:29108"/>
        <note>high affinity</note>
    </ligand>
</feature>
<feature type="binding site" evidence="1">
    <location>
        <position position="87"/>
    </location>
    <ligand>
        <name>Zn(2+)</name>
        <dbReference type="ChEBI" id="CHEBI:29105"/>
    </ligand>
</feature>
<feature type="binding site" evidence="1">
    <location>
        <position position="91"/>
    </location>
    <ligand>
        <name>Zn(2+)</name>
        <dbReference type="ChEBI" id="CHEBI:29105"/>
    </ligand>
</feature>
<protein>
    <recommendedName>
        <fullName>Protein S100-A7-like 2</fullName>
    </recommendedName>
    <alternativeName>
        <fullName>S100 calcium-binding protein A7-like 2</fullName>
    </alternativeName>
</protein>
<comment type="interaction">
    <interactant intactId="EBI-12006206">
        <id>Q5SY68</id>
    </interactant>
    <interactant intactId="EBI-750734">
        <id>Q9NRY6</id>
        <label>PLSCR3</label>
    </interactant>
    <organismsDiffer>false</organismsDiffer>
    <experiments>3</experiments>
</comment>
<comment type="interaction">
    <interactant intactId="EBI-12006206">
        <id>Q5SY68</id>
    </interactant>
    <interactant intactId="EBI-357520">
        <id>P31151</id>
        <label>S100A7</label>
    </interactant>
    <organismsDiffer>false</organismsDiffer>
    <experiments>10</experiments>
</comment>
<comment type="interaction">
    <interactant intactId="EBI-12006206">
        <id>Q5SY68</id>
    </interactant>
    <interactant intactId="EBI-13077820">
        <id>Q86SG5</id>
        <label>S100A7A</label>
    </interactant>
    <organismsDiffer>false</organismsDiffer>
    <experiments>8</experiments>
</comment>
<comment type="similarity">
    <text evidence="3">Belongs to the S-100 family.</text>
</comment>
<keyword id="KW-0106">Calcium</keyword>
<keyword id="KW-0479">Metal-binding</keyword>
<keyword id="KW-1185">Reference proteome</keyword>
<keyword id="KW-0677">Repeat</keyword>
<keyword id="KW-0862">Zinc</keyword>
<reference key="1">
    <citation type="journal article" date="2006" name="Nature">
        <title>The DNA sequence and biological annotation of human chromosome 1.</title>
        <authorList>
            <person name="Gregory S.G."/>
            <person name="Barlow K.F."/>
            <person name="McLay K.E."/>
            <person name="Kaul R."/>
            <person name="Swarbreck D."/>
            <person name="Dunham A."/>
            <person name="Scott C.E."/>
            <person name="Howe K.L."/>
            <person name="Woodfine K."/>
            <person name="Spencer C.C.A."/>
            <person name="Jones M.C."/>
            <person name="Gillson C."/>
            <person name="Searle S."/>
            <person name="Zhou Y."/>
            <person name="Kokocinski F."/>
            <person name="McDonald L."/>
            <person name="Evans R."/>
            <person name="Phillips K."/>
            <person name="Atkinson A."/>
            <person name="Cooper R."/>
            <person name="Jones C."/>
            <person name="Hall R.E."/>
            <person name="Andrews T.D."/>
            <person name="Lloyd C."/>
            <person name="Ainscough R."/>
            <person name="Almeida J.P."/>
            <person name="Ambrose K.D."/>
            <person name="Anderson F."/>
            <person name="Andrew R.W."/>
            <person name="Ashwell R.I.S."/>
            <person name="Aubin K."/>
            <person name="Babbage A.K."/>
            <person name="Bagguley C.L."/>
            <person name="Bailey J."/>
            <person name="Beasley H."/>
            <person name="Bethel G."/>
            <person name="Bird C.P."/>
            <person name="Bray-Allen S."/>
            <person name="Brown J.Y."/>
            <person name="Brown A.J."/>
            <person name="Buckley D."/>
            <person name="Burton J."/>
            <person name="Bye J."/>
            <person name="Carder C."/>
            <person name="Chapman J.C."/>
            <person name="Clark S.Y."/>
            <person name="Clarke G."/>
            <person name="Clee C."/>
            <person name="Cobley V."/>
            <person name="Collier R.E."/>
            <person name="Corby N."/>
            <person name="Coville G.J."/>
            <person name="Davies J."/>
            <person name="Deadman R."/>
            <person name="Dunn M."/>
            <person name="Earthrowl M."/>
            <person name="Ellington A.G."/>
            <person name="Errington H."/>
            <person name="Frankish A."/>
            <person name="Frankland J."/>
            <person name="French L."/>
            <person name="Garner P."/>
            <person name="Garnett J."/>
            <person name="Gay L."/>
            <person name="Ghori M.R.J."/>
            <person name="Gibson R."/>
            <person name="Gilby L.M."/>
            <person name="Gillett W."/>
            <person name="Glithero R.J."/>
            <person name="Grafham D.V."/>
            <person name="Griffiths C."/>
            <person name="Griffiths-Jones S."/>
            <person name="Grocock R."/>
            <person name="Hammond S."/>
            <person name="Harrison E.S.I."/>
            <person name="Hart E."/>
            <person name="Haugen E."/>
            <person name="Heath P.D."/>
            <person name="Holmes S."/>
            <person name="Holt K."/>
            <person name="Howden P.J."/>
            <person name="Hunt A.R."/>
            <person name="Hunt S.E."/>
            <person name="Hunter G."/>
            <person name="Isherwood J."/>
            <person name="James R."/>
            <person name="Johnson C."/>
            <person name="Johnson D."/>
            <person name="Joy A."/>
            <person name="Kay M."/>
            <person name="Kershaw J.K."/>
            <person name="Kibukawa M."/>
            <person name="Kimberley A.M."/>
            <person name="King A."/>
            <person name="Knights A.J."/>
            <person name="Lad H."/>
            <person name="Laird G."/>
            <person name="Lawlor S."/>
            <person name="Leongamornlert D.A."/>
            <person name="Lloyd D.M."/>
            <person name="Loveland J."/>
            <person name="Lovell J."/>
            <person name="Lush M.J."/>
            <person name="Lyne R."/>
            <person name="Martin S."/>
            <person name="Mashreghi-Mohammadi M."/>
            <person name="Matthews L."/>
            <person name="Matthews N.S.W."/>
            <person name="McLaren S."/>
            <person name="Milne S."/>
            <person name="Mistry S."/>
            <person name="Moore M.J.F."/>
            <person name="Nickerson T."/>
            <person name="O'Dell C.N."/>
            <person name="Oliver K."/>
            <person name="Palmeiri A."/>
            <person name="Palmer S.A."/>
            <person name="Parker A."/>
            <person name="Patel D."/>
            <person name="Pearce A.V."/>
            <person name="Peck A.I."/>
            <person name="Pelan S."/>
            <person name="Phelps K."/>
            <person name="Phillimore B.J."/>
            <person name="Plumb R."/>
            <person name="Rajan J."/>
            <person name="Raymond C."/>
            <person name="Rouse G."/>
            <person name="Saenphimmachak C."/>
            <person name="Sehra H.K."/>
            <person name="Sheridan E."/>
            <person name="Shownkeen R."/>
            <person name="Sims S."/>
            <person name="Skuce C.D."/>
            <person name="Smith M."/>
            <person name="Steward C."/>
            <person name="Subramanian S."/>
            <person name="Sycamore N."/>
            <person name="Tracey A."/>
            <person name="Tromans A."/>
            <person name="Van Helmond Z."/>
            <person name="Wall M."/>
            <person name="Wallis J.M."/>
            <person name="White S."/>
            <person name="Whitehead S.L."/>
            <person name="Wilkinson J.E."/>
            <person name="Willey D.L."/>
            <person name="Williams H."/>
            <person name="Wilming L."/>
            <person name="Wray P.W."/>
            <person name="Wu Z."/>
            <person name="Coulson A."/>
            <person name="Vaudin M."/>
            <person name="Sulston J.E."/>
            <person name="Durbin R.M."/>
            <person name="Hubbard T."/>
            <person name="Wooster R."/>
            <person name="Dunham I."/>
            <person name="Carter N.P."/>
            <person name="McVean G."/>
            <person name="Ross M.T."/>
            <person name="Harrow J."/>
            <person name="Olson M.V."/>
            <person name="Beck S."/>
            <person name="Rogers J."/>
            <person name="Bentley D.R."/>
        </authorList>
    </citation>
    <scope>NUCLEOTIDE SEQUENCE [LARGE SCALE GENOMIC DNA]</scope>
</reference>
<reference key="2">
    <citation type="journal article" date="2003" name="J. Mol. Evol.">
        <title>Genomic and phylogenetic analysis of the S100A7 (psoriasin) gene duplications within the region of the S100 gene cluster on human chromosome 1q21.</title>
        <authorList>
            <person name="Kulski J.K."/>
            <person name="Lim C.P."/>
            <person name="Dunn D.S."/>
            <person name="Bellgard M."/>
        </authorList>
    </citation>
    <scope>IDENTIFICATION</scope>
</reference>
<organism>
    <name type="scientific">Homo sapiens</name>
    <name type="common">Human</name>
    <dbReference type="NCBI Taxonomy" id="9606"/>
    <lineage>
        <taxon>Eukaryota</taxon>
        <taxon>Metazoa</taxon>
        <taxon>Chordata</taxon>
        <taxon>Craniata</taxon>
        <taxon>Vertebrata</taxon>
        <taxon>Euteleostomi</taxon>
        <taxon>Mammalia</taxon>
        <taxon>Eutheria</taxon>
        <taxon>Euarchontoglires</taxon>
        <taxon>Primates</taxon>
        <taxon>Haplorrhini</taxon>
        <taxon>Catarrhini</taxon>
        <taxon>Hominidae</taxon>
        <taxon>Homo</taxon>
    </lineage>
</organism>